<comment type="function">
    <text evidence="1">Involved in acetate metabolism.</text>
</comment>
<comment type="catalytic activity">
    <reaction>
        <text>acetyl-CoA + phosphate = acetyl phosphate + CoA</text>
        <dbReference type="Rhea" id="RHEA:19521"/>
        <dbReference type="ChEBI" id="CHEBI:22191"/>
        <dbReference type="ChEBI" id="CHEBI:43474"/>
        <dbReference type="ChEBI" id="CHEBI:57287"/>
        <dbReference type="ChEBI" id="CHEBI:57288"/>
        <dbReference type="EC" id="2.3.1.8"/>
    </reaction>
</comment>
<comment type="pathway">
    <text>Metabolic intermediate biosynthesis; acetyl-CoA biosynthesis; acetyl-CoA from acetate: step 2/2.</text>
</comment>
<comment type="subunit">
    <text evidence="1">Homohexamer.</text>
</comment>
<comment type="subcellular location">
    <subcellularLocation>
        <location evidence="2">Cytoplasm</location>
    </subcellularLocation>
</comment>
<comment type="domain">
    <text evidence="1">The N-terminal region seems to be important for proper quaternary structure. The C-terminal region contains the substrate-binding site (By similarity).</text>
</comment>
<comment type="similarity">
    <text evidence="2">In the N-terminal section; belongs to the CobB/CobQ family.</text>
</comment>
<comment type="similarity">
    <text evidence="2">In the C-terminal section; belongs to the phosphate acetyltransferase and butyryltransferase family.</text>
</comment>
<comment type="sequence caution" evidence="2">
    <conflict type="erroneous initiation">
        <sequence resource="EMBL-CDS" id="AAF09663"/>
    </conflict>
    <text>Extended N-terminus.</text>
</comment>
<keyword id="KW-0012">Acyltransferase</keyword>
<keyword id="KW-0963">Cytoplasm</keyword>
<keyword id="KW-1185">Reference proteome</keyword>
<keyword id="KW-0808">Transferase</keyword>
<accession>Q9RY77</accession>
<feature type="chain" id="PRO_0000405546" description="Phosphate acetyltransferase">
    <location>
        <begin position="1"/>
        <end position="702"/>
    </location>
</feature>
<feature type="region of interest" description="Phosphate acetyltransferase">
    <location>
        <begin position="375"/>
        <end position="702"/>
    </location>
</feature>
<name>PTA_DEIRA</name>
<sequence length="702" mass="74665">MKTLFLAPTRNGVGLSSTALGLARALERQSLKVAFLKPIAQTYEPRTDDSVHFARAVAHLTTPDPIPLTRAEELLSQGGEEDLMEQVIALAREAAGEGSDVLIAEGLALNERNVYAGTLNARLARNLEADTVLVSSLAGVTPAELADELEIAAQGYRRSDGSGLAGFVLNFAPRELDFGSLMAELRSRSRVLASGELPLLGVVSLDPALRQLRTLDVARALDAEIINAGEAESRRVSSTVVTARSVPQMTNLFTSGALIVTPADREDVIMAAALSHLSGTPLAGLMYTSGSAPEATIQQLCEVALTSSLPVLRVPTNSFETASRLVHLDFRVPHDDPRRMDRMLDYIADRLDTVPLGARLRAPGVAGERRLPPSAFRYELIQRARAANKRIVLPEGDEPRTVKAAIRCTEKGIARCVLLAPPEKVRQVAQGQGLELPEGLEIIDPETVRGKYVAPMVELRKSKGLTEPQAEAQLEDSVVLGTMMLALGEVDGLVSGAVHTTASTVRPALQLIKTAPGSSLVSSVFFMLMPEQVLVYGDAAINPDPNAQELADIAIQSADSAHAFGIPVRVAMLSYSTGESGSGEDVEKVKEATKLVRERRPELLVDGPLQYDAASVPSVGRSKAPDSPVAGRATVFIFPDLNTGNTTYKAVQRSAGVVAVGPMLQGLRKPVNDLSRGALVDDIVYTIALTAIQATQSAADCG</sequence>
<organism>
    <name type="scientific">Deinococcus radiodurans (strain ATCC 13939 / DSM 20539 / JCM 16871 / CCUG 27074 / LMG 4051 / NBRC 15346 / NCIMB 9279 / VKM B-1422 / R1)</name>
    <dbReference type="NCBI Taxonomy" id="243230"/>
    <lineage>
        <taxon>Bacteria</taxon>
        <taxon>Thermotogati</taxon>
        <taxon>Deinococcota</taxon>
        <taxon>Deinococci</taxon>
        <taxon>Deinococcales</taxon>
        <taxon>Deinococcaceae</taxon>
        <taxon>Deinococcus</taxon>
    </lineage>
</organism>
<evidence type="ECO:0000250" key="1"/>
<evidence type="ECO:0000305" key="2"/>
<protein>
    <recommendedName>
        <fullName>Phosphate acetyltransferase</fullName>
        <ecNumber>2.3.1.8</ecNumber>
    </recommendedName>
    <alternativeName>
        <fullName>Phosphotransacetylase</fullName>
    </alternativeName>
</protein>
<gene>
    <name type="primary">pta</name>
    <name type="ordered locus">DR_0073</name>
</gene>
<reference key="1">
    <citation type="journal article" date="1999" name="Science">
        <title>Genome sequence of the radioresistant bacterium Deinococcus radiodurans R1.</title>
        <authorList>
            <person name="White O."/>
            <person name="Eisen J.A."/>
            <person name="Heidelberg J.F."/>
            <person name="Hickey E.K."/>
            <person name="Peterson J.D."/>
            <person name="Dodson R.J."/>
            <person name="Haft D.H."/>
            <person name="Gwinn M.L."/>
            <person name="Nelson W.C."/>
            <person name="Richardson D.L."/>
            <person name="Moffat K.S."/>
            <person name="Qin H."/>
            <person name="Jiang L."/>
            <person name="Pamphile W."/>
            <person name="Crosby M."/>
            <person name="Shen M."/>
            <person name="Vamathevan J.J."/>
            <person name="Lam P."/>
            <person name="McDonald L.A."/>
            <person name="Utterback T.R."/>
            <person name="Zalewski C."/>
            <person name="Makarova K.S."/>
            <person name="Aravind L."/>
            <person name="Daly M.J."/>
            <person name="Minton K.W."/>
            <person name="Fleischmann R.D."/>
            <person name="Ketchum K.A."/>
            <person name="Nelson K.E."/>
            <person name="Salzberg S.L."/>
            <person name="Smith H.O."/>
            <person name="Venter J.C."/>
            <person name="Fraser C.M."/>
        </authorList>
    </citation>
    <scope>NUCLEOTIDE SEQUENCE [LARGE SCALE GENOMIC DNA]</scope>
    <source>
        <strain>ATCC 13939 / DSM 20539 / JCM 16871 / CCUG 27074 / LMG 4051 / NBRC 15346 / NCIMB 9279 / VKM B-1422 / R1</strain>
    </source>
</reference>
<dbReference type="EC" id="2.3.1.8"/>
<dbReference type="EMBL" id="AE000513">
    <property type="protein sequence ID" value="AAF09663.1"/>
    <property type="status" value="ALT_INIT"/>
    <property type="molecule type" value="Genomic_DNA"/>
</dbReference>
<dbReference type="PIR" id="G75563">
    <property type="entry name" value="G75563"/>
</dbReference>
<dbReference type="RefSeq" id="NP_293799.1">
    <property type="nucleotide sequence ID" value="NC_001263.1"/>
</dbReference>
<dbReference type="RefSeq" id="WP_027480235.1">
    <property type="nucleotide sequence ID" value="NC_001263.1"/>
</dbReference>
<dbReference type="SMR" id="Q9RY77"/>
<dbReference type="STRING" id="243230.DR_0073"/>
<dbReference type="PaxDb" id="243230-DR_0073"/>
<dbReference type="EnsemblBacteria" id="AAF09663">
    <property type="protein sequence ID" value="AAF09663"/>
    <property type="gene ID" value="DR_0073"/>
</dbReference>
<dbReference type="GeneID" id="69516303"/>
<dbReference type="KEGG" id="dra:DR_0073"/>
<dbReference type="PATRIC" id="fig|243230.17.peg.236"/>
<dbReference type="eggNOG" id="COG0280">
    <property type="taxonomic scope" value="Bacteria"/>
</dbReference>
<dbReference type="eggNOG" id="COG0857">
    <property type="taxonomic scope" value="Bacteria"/>
</dbReference>
<dbReference type="HOGENOM" id="CLU_019723_2_1_0"/>
<dbReference type="InParanoid" id="Q9RY77"/>
<dbReference type="OrthoDB" id="9805787at2"/>
<dbReference type="UniPathway" id="UPA00340">
    <property type="reaction ID" value="UER00459"/>
</dbReference>
<dbReference type="Proteomes" id="UP000002524">
    <property type="component" value="Chromosome 1"/>
</dbReference>
<dbReference type="GO" id="GO:0005737">
    <property type="term" value="C:cytoplasm"/>
    <property type="evidence" value="ECO:0007669"/>
    <property type="project" value="UniProtKB-SubCell"/>
</dbReference>
<dbReference type="GO" id="GO:0008959">
    <property type="term" value="F:phosphate acetyltransferase activity"/>
    <property type="evidence" value="ECO:0007669"/>
    <property type="project" value="UniProtKB-EC"/>
</dbReference>
<dbReference type="GO" id="GO:0006085">
    <property type="term" value="P:acetyl-CoA biosynthetic process"/>
    <property type="evidence" value="ECO:0007669"/>
    <property type="project" value="UniProtKB-UniPathway"/>
</dbReference>
<dbReference type="CDD" id="cd03109">
    <property type="entry name" value="DTBS"/>
    <property type="match status" value="1"/>
</dbReference>
<dbReference type="FunFam" id="3.40.50.10750:FF:000001">
    <property type="entry name" value="Phosphate acetyltransferase"/>
    <property type="match status" value="1"/>
</dbReference>
<dbReference type="Gene3D" id="3.40.50.10950">
    <property type="match status" value="1"/>
</dbReference>
<dbReference type="Gene3D" id="3.40.1390.20">
    <property type="entry name" value="HprK N-terminal domain-like"/>
    <property type="match status" value="1"/>
</dbReference>
<dbReference type="Gene3D" id="3.40.50.10750">
    <property type="entry name" value="Isocitrate/Isopropylmalate dehydrogenase-like"/>
    <property type="match status" value="1"/>
</dbReference>
<dbReference type="Gene3D" id="3.40.50.300">
    <property type="entry name" value="P-loop containing nucleotide triphosphate hydrolases"/>
    <property type="match status" value="1"/>
</dbReference>
<dbReference type="InterPro" id="IPR010766">
    <property type="entry name" value="DRTGG"/>
</dbReference>
<dbReference type="InterPro" id="IPR016475">
    <property type="entry name" value="P-Actrans_bac"/>
</dbReference>
<dbReference type="InterPro" id="IPR027417">
    <property type="entry name" value="P-loop_NTPase"/>
</dbReference>
<dbReference type="InterPro" id="IPR004614">
    <property type="entry name" value="P_AcTrfase"/>
</dbReference>
<dbReference type="InterPro" id="IPR042113">
    <property type="entry name" value="P_AcTrfase_dom1"/>
</dbReference>
<dbReference type="InterPro" id="IPR042112">
    <property type="entry name" value="P_AcTrfase_dom2"/>
</dbReference>
<dbReference type="InterPro" id="IPR050500">
    <property type="entry name" value="Phos_Acetyltrans/Butyryltrans"/>
</dbReference>
<dbReference type="InterPro" id="IPR002505">
    <property type="entry name" value="PTA_PTB"/>
</dbReference>
<dbReference type="InterPro" id="IPR028979">
    <property type="entry name" value="Ser_kin/Pase_Hpr-like_N_sf"/>
</dbReference>
<dbReference type="NCBIfam" id="NF004167">
    <property type="entry name" value="PRK05632.1"/>
    <property type="match status" value="1"/>
</dbReference>
<dbReference type="NCBIfam" id="NF007233">
    <property type="entry name" value="PRK09653.1"/>
    <property type="match status" value="1"/>
</dbReference>
<dbReference type="NCBIfam" id="TIGR00651">
    <property type="entry name" value="pta"/>
    <property type="match status" value="1"/>
</dbReference>
<dbReference type="PANTHER" id="PTHR43356">
    <property type="entry name" value="PHOSPHATE ACETYLTRANSFERASE"/>
    <property type="match status" value="1"/>
</dbReference>
<dbReference type="PANTHER" id="PTHR43356:SF3">
    <property type="entry name" value="PHOSPHATE ACETYLTRANSFERASE"/>
    <property type="match status" value="1"/>
</dbReference>
<dbReference type="Pfam" id="PF13500">
    <property type="entry name" value="AAA_26"/>
    <property type="match status" value="1"/>
</dbReference>
<dbReference type="Pfam" id="PF07085">
    <property type="entry name" value="DRTGG"/>
    <property type="match status" value="1"/>
</dbReference>
<dbReference type="Pfam" id="PF01515">
    <property type="entry name" value="PTA_PTB"/>
    <property type="match status" value="1"/>
</dbReference>
<dbReference type="PIRSF" id="PIRSF006107">
    <property type="entry name" value="PhpActrans_proteobac"/>
    <property type="match status" value="1"/>
</dbReference>
<dbReference type="SUPFAM" id="SSF75138">
    <property type="entry name" value="HprK N-terminal domain-like"/>
    <property type="match status" value="1"/>
</dbReference>
<dbReference type="SUPFAM" id="SSF53659">
    <property type="entry name" value="Isocitrate/Isopropylmalate dehydrogenase-like"/>
    <property type="match status" value="1"/>
</dbReference>
<dbReference type="SUPFAM" id="SSF52540">
    <property type="entry name" value="P-loop containing nucleoside triphosphate hydrolases"/>
    <property type="match status" value="1"/>
</dbReference>
<proteinExistence type="inferred from homology"/>